<sequence>MMDETSTTETVAAAELRQFIERVERLEEEKAAIQGDIKDVMGEAKGRGYDTKAIRTIIRLRKKDANERIEEETILQTYMAALGME</sequence>
<comment type="similarity">
    <text evidence="1">Belongs to the UPF0335 family.</text>
</comment>
<evidence type="ECO:0000255" key="1">
    <source>
        <dbReference type="HAMAP-Rule" id="MF_00797"/>
    </source>
</evidence>
<dbReference type="EMBL" id="AE007870">
    <property type="protein sequence ID" value="AAK89649.1"/>
    <property type="molecule type" value="Genomic_DNA"/>
</dbReference>
<dbReference type="PIR" id="AB3019">
    <property type="entry name" value="AB3019"/>
</dbReference>
<dbReference type="PIR" id="G98265">
    <property type="entry name" value="G98265"/>
</dbReference>
<dbReference type="RefSeq" id="NP_356864.1">
    <property type="nucleotide sequence ID" value="NC_003063.2"/>
</dbReference>
<dbReference type="RefSeq" id="WP_006314683.1">
    <property type="nucleotide sequence ID" value="NC_003063.2"/>
</dbReference>
<dbReference type="SMR" id="Q8U9H0"/>
<dbReference type="STRING" id="176299.Atu3758"/>
<dbReference type="EnsemblBacteria" id="AAK89649">
    <property type="protein sequence ID" value="AAK89649"/>
    <property type="gene ID" value="Atu3758"/>
</dbReference>
<dbReference type="KEGG" id="atu:Atu3758"/>
<dbReference type="PATRIC" id="fig|176299.10.peg.3593"/>
<dbReference type="eggNOG" id="COG3750">
    <property type="taxonomic scope" value="Bacteria"/>
</dbReference>
<dbReference type="HOGENOM" id="CLU_158651_2_0_5"/>
<dbReference type="OrthoDB" id="9813793at2"/>
<dbReference type="PhylomeDB" id="Q8U9H0"/>
<dbReference type="BioCyc" id="AGRO:ATU3758-MONOMER"/>
<dbReference type="Proteomes" id="UP000000813">
    <property type="component" value="Chromosome linear"/>
</dbReference>
<dbReference type="GO" id="GO:0003677">
    <property type="term" value="F:DNA binding"/>
    <property type="evidence" value="ECO:0007669"/>
    <property type="project" value="InterPro"/>
</dbReference>
<dbReference type="HAMAP" id="MF_00797">
    <property type="entry name" value="UPF0335"/>
    <property type="match status" value="1"/>
</dbReference>
<dbReference type="InterPro" id="IPR018753">
    <property type="entry name" value="GapR-like"/>
</dbReference>
<dbReference type="InterPro" id="IPR046367">
    <property type="entry name" value="GapR-like_DNA-bd"/>
</dbReference>
<dbReference type="NCBIfam" id="NF010247">
    <property type="entry name" value="PRK13694.1"/>
    <property type="match status" value="1"/>
</dbReference>
<dbReference type="Pfam" id="PF10073">
    <property type="entry name" value="GapR_DNA-bd"/>
    <property type="match status" value="1"/>
</dbReference>
<accession>Q8U9H0</accession>
<accession>Q7CT86</accession>
<protein>
    <recommendedName>
        <fullName evidence="1">UPF0335 protein Atu3758</fullName>
    </recommendedName>
</protein>
<keyword id="KW-1185">Reference proteome</keyword>
<gene>
    <name type="ordered locus">Atu3758</name>
    <name type="ORF">AGR_L_2151</name>
</gene>
<reference key="1">
    <citation type="journal article" date="2001" name="Science">
        <title>The genome of the natural genetic engineer Agrobacterium tumefaciens C58.</title>
        <authorList>
            <person name="Wood D.W."/>
            <person name="Setubal J.C."/>
            <person name="Kaul R."/>
            <person name="Monks D.E."/>
            <person name="Kitajima J.P."/>
            <person name="Okura V.K."/>
            <person name="Zhou Y."/>
            <person name="Chen L."/>
            <person name="Wood G.E."/>
            <person name="Almeida N.F. Jr."/>
            <person name="Woo L."/>
            <person name="Chen Y."/>
            <person name="Paulsen I.T."/>
            <person name="Eisen J.A."/>
            <person name="Karp P.D."/>
            <person name="Bovee D. Sr."/>
            <person name="Chapman P."/>
            <person name="Clendenning J."/>
            <person name="Deatherage G."/>
            <person name="Gillet W."/>
            <person name="Grant C."/>
            <person name="Kutyavin T."/>
            <person name="Levy R."/>
            <person name="Li M.-J."/>
            <person name="McClelland E."/>
            <person name="Palmieri A."/>
            <person name="Raymond C."/>
            <person name="Rouse G."/>
            <person name="Saenphimmachak C."/>
            <person name="Wu Z."/>
            <person name="Romero P."/>
            <person name="Gordon D."/>
            <person name="Zhang S."/>
            <person name="Yoo H."/>
            <person name="Tao Y."/>
            <person name="Biddle P."/>
            <person name="Jung M."/>
            <person name="Krespan W."/>
            <person name="Perry M."/>
            <person name="Gordon-Kamm B."/>
            <person name="Liao L."/>
            <person name="Kim S."/>
            <person name="Hendrick C."/>
            <person name="Zhao Z.-Y."/>
            <person name="Dolan M."/>
            <person name="Chumley F."/>
            <person name="Tingey S.V."/>
            <person name="Tomb J.-F."/>
            <person name="Gordon M.P."/>
            <person name="Olson M.V."/>
            <person name="Nester E.W."/>
        </authorList>
    </citation>
    <scope>NUCLEOTIDE SEQUENCE [LARGE SCALE GENOMIC DNA]</scope>
    <source>
        <strain>C58 / ATCC 33970</strain>
    </source>
</reference>
<reference key="2">
    <citation type="journal article" date="2001" name="Science">
        <title>Genome sequence of the plant pathogen and biotechnology agent Agrobacterium tumefaciens C58.</title>
        <authorList>
            <person name="Goodner B."/>
            <person name="Hinkle G."/>
            <person name="Gattung S."/>
            <person name="Miller N."/>
            <person name="Blanchard M."/>
            <person name="Qurollo B."/>
            <person name="Goldman B.S."/>
            <person name="Cao Y."/>
            <person name="Askenazi M."/>
            <person name="Halling C."/>
            <person name="Mullin L."/>
            <person name="Houmiel K."/>
            <person name="Gordon J."/>
            <person name="Vaudin M."/>
            <person name="Iartchouk O."/>
            <person name="Epp A."/>
            <person name="Liu F."/>
            <person name="Wollam C."/>
            <person name="Allinger M."/>
            <person name="Doughty D."/>
            <person name="Scott C."/>
            <person name="Lappas C."/>
            <person name="Markelz B."/>
            <person name="Flanagan C."/>
            <person name="Crowell C."/>
            <person name="Gurson J."/>
            <person name="Lomo C."/>
            <person name="Sear C."/>
            <person name="Strub G."/>
            <person name="Cielo C."/>
            <person name="Slater S."/>
        </authorList>
    </citation>
    <scope>NUCLEOTIDE SEQUENCE [LARGE SCALE GENOMIC DNA]</scope>
    <source>
        <strain>C58 / ATCC 33970</strain>
    </source>
</reference>
<proteinExistence type="inferred from homology"/>
<feature type="chain" id="PRO_0000219919" description="UPF0335 protein Atu3758">
    <location>
        <begin position="1"/>
        <end position="85"/>
    </location>
</feature>
<name>Y3758_AGRFC</name>
<organism>
    <name type="scientific">Agrobacterium fabrum (strain C58 / ATCC 33970)</name>
    <name type="common">Agrobacterium tumefaciens (strain C58)</name>
    <dbReference type="NCBI Taxonomy" id="176299"/>
    <lineage>
        <taxon>Bacteria</taxon>
        <taxon>Pseudomonadati</taxon>
        <taxon>Pseudomonadota</taxon>
        <taxon>Alphaproteobacteria</taxon>
        <taxon>Hyphomicrobiales</taxon>
        <taxon>Rhizobiaceae</taxon>
        <taxon>Rhizobium/Agrobacterium group</taxon>
        <taxon>Agrobacterium</taxon>
        <taxon>Agrobacterium tumefaciens complex</taxon>
    </lineage>
</organism>